<reference key="1">
    <citation type="journal article" date="2002" name="Science">
        <title>50 million years of genomic stasis in endosymbiotic bacteria.</title>
        <authorList>
            <person name="Tamas I."/>
            <person name="Klasson L."/>
            <person name="Canbaeck B."/>
            <person name="Naeslund A.K."/>
            <person name="Eriksson A.-S."/>
            <person name="Wernegreen J.J."/>
            <person name="Sandstroem J.P."/>
            <person name="Moran N.A."/>
            <person name="Andersson S.G.E."/>
        </authorList>
    </citation>
    <scope>NUCLEOTIDE SEQUENCE [LARGE SCALE GENOMIC DNA]</scope>
    <source>
        <strain>Sg</strain>
    </source>
</reference>
<evidence type="ECO:0000250" key="1">
    <source>
        <dbReference type="UniProtKB" id="P0A9J8"/>
    </source>
</evidence>
<evidence type="ECO:0000250" key="2">
    <source>
        <dbReference type="UniProtKB" id="P57472"/>
    </source>
</evidence>
<evidence type="ECO:0000255" key="3"/>
<evidence type="ECO:0000255" key="4">
    <source>
        <dbReference type="PROSITE-ProRule" id="PRU00515"/>
    </source>
</evidence>
<evidence type="ECO:0000255" key="5">
    <source>
        <dbReference type="PROSITE-ProRule" id="PRU00517"/>
    </source>
</evidence>
<evidence type="ECO:0000255" key="6">
    <source>
        <dbReference type="PROSITE-ProRule" id="PRU01007"/>
    </source>
</evidence>
<sequence length="385" mass="43888">MPSKNDLLSFRSEINNIDKNIVQLLAKRKKLVLNIAESKIKNNQPIRDIEREKILLEKLTNLGKKNNLNTNYITRLFQLIIEESVLTQKKLLNKFCNDNNLDLASFSFLGPKGSYSHIAASQYAEQNFKTCIENACLSFNEVIQSVENNQTDYAVLPIENSCSGFINEIFDILKKTNLFIIGEINISINHCLLAIKKIELNKIKAVYSHPQPFQQCSYFIKKFPNWKIQYTNSTADAMKKIVKYNITTNAALGSELGSKIYGLKVLYKNLANKKKNITRFILLSRKPVSISSKIPTKTTLIFNTGQESGALAEVLLILKKNKLIMKKLTSQNIYKNPWEEMFYIDVQANLSSSLMQETLEKIGKITKFIKILGCYPSENITPIIP</sequence>
<organism>
    <name type="scientific">Buchnera aphidicola subsp. Schizaphis graminum (strain Sg)</name>
    <dbReference type="NCBI Taxonomy" id="198804"/>
    <lineage>
        <taxon>Bacteria</taxon>
        <taxon>Pseudomonadati</taxon>
        <taxon>Pseudomonadota</taxon>
        <taxon>Gammaproteobacteria</taxon>
        <taxon>Enterobacterales</taxon>
        <taxon>Erwiniaceae</taxon>
        <taxon>Buchnera</taxon>
    </lineage>
</organism>
<name>CMPDT_BUCAP</name>
<gene>
    <name type="primary">pheA</name>
    <name type="ordered locus">BUsg_379</name>
</gene>
<proteinExistence type="inferred from homology"/>
<comment type="function">
    <text evidence="1">Catalyzes the Claisen rearrangement of chorismate to prephenate and the decarboxylation/dehydration of prephenate to phenylpyruvate.</text>
</comment>
<comment type="catalytic activity">
    <reaction evidence="1">
        <text>chorismate = prephenate</text>
        <dbReference type="Rhea" id="RHEA:13897"/>
        <dbReference type="ChEBI" id="CHEBI:29748"/>
        <dbReference type="ChEBI" id="CHEBI:29934"/>
        <dbReference type="EC" id="5.4.99.5"/>
    </reaction>
</comment>
<comment type="catalytic activity">
    <reaction evidence="1">
        <text>prephenate + H(+) = 3-phenylpyruvate + CO2 + H2O</text>
        <dbReference type="Rhea" id="RHEA:21648"/>
        <dbReference type="ChEBI" id="CHEBI:15377"/>
        <dbReference type="ChEBI" id="CHEBI:15378"/>
        <dbReference type="ChEBI" id="CHEBI:16526"/>
        <dbReference type="ChEBI" id="CHEBI:18005"/>
        <dbReference type="ChEBI" id="CHEBI:29934"/>
        <dbReference type="EC" id="4.2.1.51"/>
    </reaction>
</comment>
<comment type="pathway">
    <text evidence="1">Amino-acid biosynthesis; L-phenylalanine biosynthesis; phenylpyruvate from prephenate: step 1/1.</text>
</comment>
<comment type="pathway">
    <text evidence="1">Metabolic intermediate biosynthesis; prephenate biosynthesis; prephenate from chorismate: step 1/1.</text>
</comment>
<comment type="subcellular location">
    <subcellularLocation>
        <location evidence="1">Cytoplasm</location>
    </subcellularLocation>
</comment>
<comment type="domain">
    <text evidence="2">The regulatory domain shows changes in the ESRP sequence, which is involved in the allosteric binding of phenylalanine. These changes suggest the desensitization of the enzyme to inhibition by phenylalanine and would permit the overproduction of phenylalanine.</text>
</comment>
<dbReference type="EC" id="5.4.99.5" evidence="1"/>
<dbReference type="EC" id="4.2.1.51" evidence="1"/>
<dbReference type="EMBL" id="AE013218">
    <property type="protein sequence ID" value="AAM67931.1"/>
    <property type="molecule type" value="Genomic_DNA"/>
</dbReference>
<dbReference type="RefSeq" id="WP_011053898.1">
    <property type="nucleotide sequence ID" value="NC_004061.1"/>
</dbReference>
<dbReference type="SMR" id="Q8K9F8"/>
<dbReference type="STRING" id="198804.BUsg_379"/>
<dbReference type="GeneID" id="93003849"/>
<dbReference type="KEGG" id="bas:BUsg_379"/>
<dbReference type="eggNOG" id="COG0077">
    <property type="taxonomic scope" value="Bacteria"/>
</dbReference>
<dbReference type="eggNOG" id="COG1605">
    <property type="taxonomic scope" value="Bacteria"/>
</dbReference>
<dbReference type="HOGENOM" id="CLU_035008_1_0_6"/>
<dbReference type="UniPathway" id="UPA00120">
    <property type="reaction ID" value="UER00203"/>
</dbReference>
<dbReference type="UniPathway" id="UPA00121">
    <property type="reaction ID" value="UER00345"/>
</dbReference>
<dbReference type="Proteomes" id="UP000000416">
    <property type="component" value="Chromosome"/>
</dbReference>
<dbReference type="GO" id="GO:0005737">
    <property type="term" value="C:cytoplasm"/>
    <property type="evidence" value="ECO:0007669"/>
    <property type="project" value="UniProtKB-SubCell"/>
</dbReference>
<dbReference type="GO" id="GO:0004106">
    <property type="term" value="F:chorismate mutase activity"/>
    <property type="evidence" value="ECO:0007669"/>
    <property type="project" value="UniProtKB-EC"/>
</dbReference>
<dbReference type="GO" id="GO:0004664">
    <property type="term" value="F:prephenate dehydratase activity"/>
    <property type="evidence" value="ECO:0007669"/>
    <property type="project" value="UniProtKB-EC"/>
</dbReference>
<dbReference type="GO" id="GO:0046417">
    <property type="term" value="P:chorismate metabolic process"/>
    <property type="evidence" value="ECO:0007669"/>
    <property type="project" value="InterPro"/>
</dbReference>
<dbReference type="GO" id="GO:0009094">
    <property type="term" value="P:L-phenylalanine biosynthetic process"/>
    <property type="evidence" value="ECO:0007669"/>
    <property type="project" value="UniProtKB-UniPathway"/>
</dbReference>
<dbReference type="CDD" id="cd04905">
    <property type="entry name" value="ACT_CM-PDT"/>
    <property type="match status" value="1"/>
</dbReference>
<dbReference type="CDD" id="cd13631">
    <property type="entry name" value="PBP2_Ct-PDT_like"/>
    <property type="match status" value="1"/>
</dbReference>
<dbReference type="FunFam" id="3.40.190.10:FF:000034">
    <property type="entry name" value="Chorismate mutase/prephenate dehydratase"/>
    <property type="match status" value="1"/>
</dbReference>
<dbReference type="Gene3D" id="3.30.70.260">
    <property type="match status" value="1"/>
</dbReference>
<dbReference type="Gene3D" id="1.20.59.10">
    <property type="entry name" value="Chorismate mutase"/>
    <property type="match status" value="1"/>
</dbReference>
<dbReference type="Gene3D" id="3.40.190.10">
    <property type="entry name" value="Periplasmic binding protein-like II"/>
    <property type="match status" value="2"/>
</dbReference>
<dbReference type="InterPro" id="IPR045865">
    <property type="entry name" value="ACT-like_dom_sf"/>
</dbReference>
<dbReference type="InterPro" id="IPR002912">
    <property type="entry name" value="ACT_dom"/>
</dbReference>
<dbReference type="InterPro" id="IPR008242">
    <property type="entry name" value="Chor_mutase/pphenate_deHydtase"/>
</dbReference>
<dbReference type="InterPro" id="IPR036263">
    <property type="entry name" value="Chorismate_II_sf"/>
</dbReference>
<dbReference type="InterPro" id="IPR036979">
    <property type="entry name" value="CM_dom_sf"/>
</dbReference>
<dbReference type="InterPro" id="IPR002701">
    <property type="entry name" value="CM_II_prokaryot"/>
</dbReference>
<dbReference type="InterPro" id="IPR010952">
    <property type="entry name" value="CM_P_1"/>
</dbReference>
<dbReference type="InterPro" id="IPR001086">
    <property type="entry name" value="Preph_deHydtase"/>
</dbReference>
<dbReference type="InterPro" id="IPR018528">
    <property type="entry name" value="Preph_deHydtase_CS"/>
</dbReference>
<dbReference type="NCBIfam" id="TIGR01797">
    <property type="entry name" value="CM_P_1"/>
    <property type="match status" value="1"/>
</dbReference>
<dbReference type="PANTHER" id="PTHR21022">
    <property type="entry name" value="PREPHENATE DEHYDRATASE P PROTEIN"/>
    <property type="match status" value="1"/>
</dbReference>
<dbReference type="PANTHER" id="PTHR21022:SF19">
    <property type="entry name" value="PREPHENATE DEHYDRATASE-RELATED"/>
    <property type="match status" value="1"/>
</dbReference>
<dbReference type="Pfam" id="PF01817">
    <property type="entry name" value="CM_2"/>
    <property type="match status" value="1"/>
</dbReference>
<dbReference type="Pfam" id="PF00800">
    <property type="entry name" value="PDT"/>
    <property type="match status" value="1"/>
</dbReference>
<dbReference type="PIRSF" id="PIRSF001500">
    <property type="entry name" value="Chor_mut_pdt_Ppr"/>
    <property type="match status" value="1"/>
</dbReference>
<dbReference type="SMART" id="SM00830">
    <property type="entry name" value="CM_2"/>
    <property type="match status" value="1"/>
</dbReference>
<dbReference type="SUPFAM" id="SSF55021">
    <property type="entry name" value="ACT-like"/>
    <property type="match status" value="1"/>
</dbReference>
<dbReference type="SUPFAM" id="SSF48600">
    <property type="entry name" value="Chorismate mutase II"/>
    <property type="match status" value="1"/>
</dbReference>
<dbReference type="SUPFAM" id="SSF53850">
    <property type="entry name" value="Periplasmic binding protein-like II"/>
    <property type="match status" value="1"/>
</dbReference>
<dbReference type="PROSITE" id="PS51671">
    <property type="entry name" value="ACT"/>
    <property type="match status" value="1"/>
</dbReference>
<dbReference type="PROSITE" id="PS51168">
    <property type="entry name" value="CHORISMATE_MUT_2"/>
    <property type="match status" value="1"/>
</dbReference>
<dbReference type="PROSITE" id="PS00857">
    <property type="entry name" value="PREPHENATE_DEHYDR_1"/>
    <property type="match status" value="1"/>
</dbReference>
<dbReference type="PROSITE" id="PS51171">
    <property type="entry name" value="PREPHENATE_DEHYDR_3"/>
    <property type="match status" value="1"/>
</dbReference>
<keyword id="KW-0021">Allosteric enzyme</keyword>
<keyword id="KW-0028">Amino-acid biosynthesis</keyword>
<keyword id="KW-0057">Aromatic amino acid biosynthesis</keyword>
<keyword id="KW-0963">Cytoplasm</keyword>
<keyword id="KW-0413">Isomerase</keyword>
<keyword id="KW-0456">Lyase</keyword>
<keyword id="KW-0511">Multifunctional enzyme</keyword>
<keyword id="KW-0584">Phenylalanine biosynthesis</keyword>
<accession>Q8K9F8</accession>
<feature type="chain" id="PRO_0000119183" description="Bifunctional chorismate mutase/prephenate dehydratase">
    <location>
        <begin position="1"/>
        <end position="385"/>
    </location>
</feature>
<feature type="domain" description="Chorismate mutase" evidence="4">
    <location>
        <begin position="1"/>
        <end position="92"/>
    </location>
</feature>
<feature type="domain" description="Prephenate dehydratase" evidence="5">
    <location>
        <begin position="105"/>
        <end position="285"/>
    </location>
</feature>
<feature type="domain" description="ACT" evidence="6">
    <location>
        <begin position="299"/>
        <end position="376"/>
    </location>
</feature>
<feature type="region of interest" description="Regulatory">
    <location>
        <begin position="286"/>
        <end position="385"/>
    </location>
</feature>
<feature type="binding site" evidence="1">
    <location>
        <position position="11"/>
    </location>
    <ligand>
        <name>substrate</name>
    </ligand>
</feature>
<feature type="binding site" evidence="1">
    <location>
        <position position="28"/>
    </location>
    <ligand>
        <name>substrate</name>
    </ligand>
</feature>
<feature type="binding site" evidence="1">
    <location>
        <position position="39"/>
    </location>
    <ligand>
        <name>substrate</name>
    </ligand>
</feature>
<feature type="binding site" evidence="1">
    <location>
        <position position="48"/>
    </location>
    <ligand>
        <name>substrate</name>
    </ligand>
</feature>
<feature type="binding site" evidence="1">
    <location>
        <position position="52"/>
    </location>
    <ligand>
        <name>substrate</name>
    </ligand>
</feature>
<feature type="binding site" evidence="1">
    <location>
        <position position="84"/>
    </location>
    <ligand>
        <name>substrate</name>
    </ligand>
</feature>
<feature type="binding site" evidence="1">
    <location>
        <position position="88"/>
    </location>
    <ligand>
        <name>substrate</name>
    </ligand>
</feature>
<feature type="site" description="Essential for prephenate dehydratase activity" evidence="3">
    <location>
        <position position="278"/>
    </location>
</feature>
<protein>
    <recommendedName>
        <fullName evidence="1">Bifunctional chorismate mutase/prephenate dehydratase</fullName>
    </recommendedName>
    <alternativeName>
        <fullName evidence="1">Chorismate mutase-prephenate dehydratase</fullName>
    </alternativeName>
    <alternativeName>
        <fullName evidence="1">P-protein</fullName>
    </alternativeName>
    <domain>
        <recommendedName>
            <fullName evidence="1">Chorismate mutase</fullName>
            <shortName evidence="1">CM</shortName>
            <ecNumber evidence="1">5.4.99.5</ecNumber>
        </recommendedName>
    </domain>
    <domain>
        <recommendedName>
            <fullName evidence="1">Prephenate dehydratase</fullName>
            <shortName evidence="1">PDT</shortName>
            <ecNumber evidence="1">4.2.1.51</ecNumber>
        </recommendedName>
    </domain>
</protein>